<comment type="function">
    <text evidence="1">Catalyzes the deacetylation of 1D-myo-inositol 2-acetamido-2-deoxy-alpha-D-glucopyranoside (GlcNAc-Ins) in the mycothiol biosynthesis pathway.</text>
</comment>
<comment type="catalytic activity">
    <reaction evidence="1">
        <text>1D-myo-inositol 2-acetamido-2-deoxy-alpha-D-glucopyranoside + H2O = 1D-myo-inositol 2-amino-2-deoxy-alpha-D-glucopyranoside + acetate</text>
        <dbReference type="Rhea" id="RHEA:26180"/>
        <dbReference type="ChEBI" id="CHEBI:15377"/>
        <dbReference type="ChEBI" id="CHEBI:30089"/>
        <dbReference type="ChEBI" id="CHEBI:52442"/>
        <dbReference type="ChEBI" id="CHEBI:58886"/>
        <dbReference type="EC" id="3.5.1.103"/>
    </reaction>
</comment>
<comment type="cofactor">
    <cofactor evidence="1">
        <name>Zn(2+)</name>
        <dbReference type="ChEBI" id="CHEBI:29105"/>
    </cofactor>
    <text evidence="1">Binds 1 zinc ion per subunit.</text>
</comment>
<comment type="similarity">
    <text evidence="1">Belongs to the MshB deacetylase family.</text>
</comment>
<organism>
    <name type="scientific">Mycobacterium bovis (strain BCG / Pasteur 1173P2)</name>
    <dbReference type="NCBI Taxonomy" id="410289"/>
    <lineage>
        <taxon>Bacteria</taxon>
        <taxon>Bacillati</taxon>
        <taxon>Actinomycetota</taxon>
        <taxon>Actinomycetes</taxon>
        <taxon>Mycobacteriales</taxon>
        <taxon>Mycobacteriaceae</taxon>
        <taxon>Mycobacterium</taxon>
        <taxon>Mycobacterium tuberculosis complex</taxon>
    </lineage>
</organism>
<protein>
    <recommendedName>
        <fullName evidence="1">1D-myo-inositol 2-acetamido-2-deoxy-alpha-D-glucopyranoside deacetylase</fullName>
        <shortName evidence="1">GlcNAc-Ins deacetylase</shortName>
        <ecNumber evidence="1">3.5.1.103</ecNumber>
    </recommendedName>
    <alternativeName>
        <fullName>N-acetyl-1-D-myo-inositol 2-amino-2-deoxy-alpha-D-glucopyranoside deacetylase</fullName>
    </alternativeName>
</protein>
<accession>A1KHW1</accession>
<name>MSHB_MYCBP</name>
<keyword id="KW-0378">Hydrolase</keyword>
<keyword id="KW-0479">Metal-binding</keyword>
<keyword id="KW-0862">Zinc</keyword>
<reference key="1">
    <citation type="journal article" date="2007" name="Proc. Natl. Acad. Sci. U.S.A.">
        <title>Genome plasticity of BCG and impact on vaccine efficacy.</title>
        <authorList>
            <person name="Brosch R."/>
            <person name="Gordon S.V."/>
            <person name="Garnier T."/>
            <person name="Eiglmeier K."/>
            <person name="Frigui W."/>
            <person name="Valenti P."/>
            <person name="Dos Santos S."/>
            <person name="Duthoy S."/>
            <person name="Lacroix C."/>
            <person name="Garcia-Pelayo C."/>
            <person name="Inwald J.K."/>
            <person name="Golby P."/>
            <person name="Garcia J.N."/>
            <person name="Hewinson R.G."/>
            <person name="Behr M.A."/>
            <person name="Quail M.A."/>
            <person name="Churcher C."/>
            <person name="Barrell B.G."/>
            <person name="Parkhill J."/>
            <person name="Cole S.T."/>
        </authorList>
    </citation>
    <scope>NUCLEOTIDE SEQUENCE [LARGE SCALE GENOMIC DNA]</scope>
    <source>
        <strain>BCG / Pasteur 1173P2</strain>
    </source>
</reference>
<dbReference type="EC" id="3.5.1.103" evidence="1"/>
<dbReference type="EMBL" id="AM408590">
    <property type="protein sequence ID" value="CAL71220.1"/>
    <property type="molecule type" value="Genomic_DNA"/>
</dbReference>
<dbReference type="RefSeq" id="WP_003406154.1">
    <property type="nucleotide sequence ID" value="NC_008769.1"/>
</dbReference>
<dbReference type="SMR" id="A1KHW1"/>
<dbReference type="GeneID" id="45425142"/>
<dbReference type="KEGG" id="mbb:BCG_1233"/>
<dbReference type="HOGENOM" id="CLU_049311_2_1_11"/>
<dbReference type="Proteomes" id="UP000001472">
    <property type="component" value="Chromosome"/>
</dbReference>
<dbReference type="GO" id="GO:0035595">
    <property type="term" value="F:N-acetylglucosaminylinositol deacetylase activity"/>
    <property type="evidence" value="ECO:0007669"/>
    <property type="project" value="UniProtKB-EC"/>
</dbReference>
<dbReference type="GO" id="GO:0008270">
    <property type="term" value="F:zinc ion binding"/>
    <property type="evidence" value="ECO:0007669"/>
    <property type="project" value="UniProtKB-UniRule"/>
</dbReference>
<dbReference type="GO" id="GO:0010125">
    <property type="term" value="P:mycothiol biosynthetic process"/>
    <property type="evidence" value="ECO:0007669"/>
    <property type="project" value="UniProtKB-UniRule"/>
</dbReference>
<dbReference type="Gene3D" id="3.40.50.10320">
    <property type="entry name" value="LmbE-like"/>
    <property type="match status" value="1"/>
</dbReference>
<dbReference type="HAMAP" id="MF_01696">
    <property type="entry name" value="MshB"/>
    <property type="match status" value="1"/>
</dbReference>
<dbReference type="InterPro" id="IPR003737">
    <property type="entry name" value="GlcNAc_PI_deacetylase-related"/>
</dbReference>
<dbReference type="InterPro" id="IPR024078">
    <property type="entry name" value="LmbE-like_dom_sf"/>
</dbReference>
<dbReference type="InterPro" id="IPR017810">
    <property type="entry name" value="Mycothiol_biosynthesis_MshB"/>
</dbReference>
<dbReference type="NCBIfam" id="TIGR03445">
    <property type="entry name" value="mycothiol_MshB"/>
    <property type="match status" value="1"/>
</dbReference>
<dbReference type="PANTHER" id="PTHR12993:SF26">
    <property type="entry name" value="1D-MYO-INOSITOL 2-ACETAMIDO-2-DEOXY-ALPHA-D-GLUCOPYRANOSIDE DEACETYLASE"/>
    <property type="match status" value="1"/>
</dbReference>
<dbReference type="PANTHER" id="PTHR12993">
    <property type="entry name" value="N-ACETYLGLUCOSAMINYL-PHOSPHATIDYLINOSITOL DE-N-ACETYLASE-RELATED"/>
    <property type="match status" value="1"/>
</dbReference>
<dbReference type="Pfam" id="PF02585">
    <property type="entry name" value="PIG-L"/>
    <property type="match status" value="1"/>
</dbReference>
<dbReference type="SUPFAM" id="SSF102588">
    <property type="entry name" value="LmbE-like"/>
    <property type="match status" value="1"/>
</dbReference>
<sequence length="303" mass="31742">MSETPRLLFVHAHPDDESLSNGATIAHYTSRGAQVHVVTCTLGEEGEVIGDRWAQLTADHADQLGGYRIGELTAALRALGVSAPIYLGGAGRWRDSGMAGTDQRSQRRFVDADPRQTVGALVAIIRELRPHVVVTYDPNGGYGHPDHVHTHTVTTAAVAAAGVGSGTADHPGDPWTVPKFYWTVLGLSALISGARALVPDDLRPEWVLPRADEIAFGYSDDGIDAVVEADEQARAAKVAALAAHATQVVVGPTGRAAALSNNLALPILADEHYVLAGGSAGARDERGWETDLLAGLGFTASGT</sequence>
<proteinExistence type="inferred from homology"/>
<feature type="chain" id="PRO_0000400195" description="1D-myo-inositol 2-acetamido-2-deoxy-alpha-D-glucopyranoside deacetylase">
    <location>
        <begin position="1"/>
        <end position="303"/>
    </location>
</feature>
<feature type="binding site" evidence="1">
    <location>
        <position position="13"/>
    </location>
    <ligand>
        <name>Zn(2+)</name>
        <dbReference type="ChEBI" id="CHEBI:29105"/>
    </ligand>
</feature>
<feature type="binding site" evidence="1">
    <location>
        <position position="16"/>
    </location>
    <ligand>
        <name>Zn(2+)</name>
        <dbReference type="ChEBI" id="CHEBI:29105"/>
    </ligand>
</feature>
<feature type="binding site" evidence="1">
    <location>
        <position position="147"/>
    </location>
    <ligand>
        <name>Zn(2+)</name>
        <dbReference type="ChEBI" id="CHEBI:29105"/>
    </ligand>
</feature>
<evidence type="ECO:0000255" key="1">
    <source>
        <dbReference type="HAMAP-Rule" id="MF_01696"/>
    </source>
</evidence>
<gene>
    <name evidence="1" type="primary">mshB</name>
    <name type="ordered locus">BCG_1233</name>
</gene>